<comment type="function">
    <text evidence="3">Protein with pleiotropic attributes mediated in a cell-compartment- and tissue-specific manner, which include the plasma membrane-associated cell signaling functions, mitochondrial chaperone, and transcriptional co-regulator of transcription factors and sex steroid hormones in the nucleus.</text>
</comment>
<comment type="function">
    <text evidence="3">In the mitochondria, together with PHB, forms large ring complexes (prohibitin complexes) in the inner mitochondrial membrane (IMM) and functions as a chaperone protein that stabilizes mitochondrial respiratory enzymes and maintains mitochondrial integrity in the IMM, which is required for mitochondrial morphogenesis, neuronal survival, and normal lifespan.</text>
</comment>
<comment type="function">
    <text evidence="3">In the nucleus, serves as transcriptional co-regulator.</text>
</comment>
<comment type="subunit">
    <text evidence="3">The mitochondrial prohibitin complex consists of two subunits (PHB1 and PHB2), assembled into a membrane-associated ring-shaped supercomplex of approximately 1 mDa.</text>
</comment>
<comment type="subcellular location">
    <subcellularLocation>
        <location evidence="2">Mitochondrion inner membrane</location>
    </subcellularLocation>
    <subcellularLocation>
        <location evidence="2">Cytoplasm</location>
    </subcellularLocation>
    <subcellularLocation>
        <location evidence="2">Nucleus</location>
    </subcellularLocation>
    <subcellularLocation>
        <location evidence="3">Cell membrane</location>
    </subcellularLocation>
</comment>
<comment type="similarity">
    <text evidence="5">Belongs to the prohibitin family.</text>
</comment>
<comment type="sequence caution" evidence="5">
    <conflict type="erroneous initiation">
        <sequence resource="EMBL-CDS" id="CAJ83765"/>
    </conflict>
    <text>Extended N-terminus.</text>
</comment>
<organism>
    <name type="scientific">Xenopus tropicalis</name>
    <name type="common">Western clawed frog</name>
    <name type="synonym">Silurana tropicalis</name>
    <dbReference type="NCBI Taxonomy" id="8364"/>
    <lineage>
        <taxon>Eukaryota</taxon>
        <taxon>Metazoa</taxon>
        <taxon>Chordata</taxon>
        <taxon>Craniata</taxon>
        <taxon>Vertebrata</taxon>
        <taxon>Euteleostomi</taxon>
        <taxon>Amphibia</taxon>
        <taxon>Batrachia</taxon>
        <taxon>Anura</taxon>
        <taxon>Pipoidea</taxon>
        <taxon>Pipidae</taxon>
        <taxon>Xenopodinae</taxon>
        <taxon>Xenopus</taxon>
        <taxon>Silurana</taxon>
    </lineage>
</organism>
<evidence type="ECO:0000250" key="1"/>
<evidence type="ECO:0000250" key="2">
    <source>
        <dbReference type="UniProtKB" id="O35129"/>
    </source>
</evidence>
<evidence type="ECO:0000250" key="3">
    <source>
        <dbReference type="UniProtKB" id="Q99623"/>
    </source>
</evidence>
<evidence type="ECO:0000255" key="4"/>
<evidence type="ECO:0000305" key="5"/>
<gene>
    <name type="primary">phb2</name>
    <name type="ORF">TGas064h09.1</name>
</gene>
<keyword id="KW-1003">Cell membrane</keyword>
<keyword id="KW-0175">Coiled coil</keyword>
<keyword id="KW-0963">Cytoplasm</keyword>
<keyword id="KW-0472">Membrane</keyword>
<keyword id="KW-0496">Mitochondrion</keyword>
<keyword id="KW-0999">Mitochondrion inner membrane</keyword>
<keyword id="KW-0539">Nucleus</keyword>
<keyword id="KW-0675">Receptor</keyword>
<keyword id="KW-1185">Reference proteome</keyword>
<keyword id="KW-0678">Repressor</keyword>
<keyword id="KW-0804">Transcription</keyword>
<keyword id="KW-0805">Transcription regulation</keyword>
<protein>
    <recommendedName>
        <fullName>Prohibitin-2</fullName>
    </recommendedName>
</protein>
<reference key="1">
    <citation type="submission" date="2006-10" db="EMBL/GenBank/DDBJ databases">
        <authorList>
            <consortium name="Sanger Xenopus tropicalis EST/cDNA project"/>
        </authorList>
    </citation>
    <scope>NUCLEOTIDE SEQUENCE [LARGE SCALE MRNA]</scope>
    <source>
        <tissue>Gastrula</tissue>
    </source>
</reference>
<reference key="2">
    <citation type="submission" date="2007-12" db="EMBL/GenBank/DDBJ databases">
        <authorList>
            <consortium name="NIH - Xenopus Gene Collection (XGC) project"/>
        </authorList>
    </citation>
    <scope>NUCLEOTIDE SEQUENCE [LARGE SCALE MRNA]</scope>
    <source>
        <tissue>Testis</tissue>
    </source>
</reference>
<name>PHB2_XENTR</name>
<accession>A9UMS3</accession>
<accession>Q28HU7</accession>
<proteinExistence type="evidence at transcript level"/>
<dbReference type="EMBL" id="CR760726">
    <property type="protein sequence ID" value="CAJ83765.1"/>
    <property type="status" value="ALT_INIT"/>
    <property type="molecule type" value="mRNA"/>
</dbReference>
<dbReference type="EMBL" id="BC157771">
    <property type="protein sequence ID" value="AAI57772.1"/>
    <property type="molecule type" value="mRNA"/>
</dbReference>
<dbReference type="RefSeq" id="NP_001016551.1">
    <property type="nucleotide sequence ID" value="NM_001016551.2"/>
</dbReference>
<dbReference type="RefSeq" id="XP_012822064.1">
    <property type="nucleotide sequence ID" value="XM_012966610.2"/>
</dbReference>
<dbReference type="SMR" id="A9UMS3"/>
<dbReference type="FunCoup" id="A9UMS3">
    <property type="interactions" value="2726"/>
</dbReference>
<dbReference type="STRING" id="8364.ENSXETP00000019621"/>
<dbReference type="PaxDb" id="8364-ENSXETP00000051592"/>
<dbReference type="GeneID" id="549305"/>
<dbReference type="KEGG" id="xtr:549305"/>
<dbReference type="AGR" id="Xenbase:XB-GENE-5844763"/>
<dbReference type="CTD" id="11331"/>
<dbReference type="eggNOG" id="KOG3090">
    <property type="taxonomic scope" value="Eukaryota"/>
</dbReference>
<dbReference type="InParanoid" id="A9UMS3"/>
<dbReference type="OrthoDB" id="275637at2759"/>
<dbReference type="Reactome" id="R-XTR-9840373">
    <property type="pathway name" value="Cellular response to mitochondrial stress"/>
</dbReference>
<dbReference type="Proteomes" id="UP000008143">
    <property type="component" value="Chromosome 7"/>
</dbReference>
<dbReference type="Bgee" id="ENSXETG00000023919">
    <property type="expression patterns" value="Expressed in heart and 16 other cell types or tissues"/>
</dbReference>
<dbReference type="GO" id="GO:0009986">
    <property type="term" value="C:cell surface"/>
    <property type="evidence" value="ECO:0000250"/>
    <property type="project" value="UniProtKB"/>
</dbReference>
<dbReference type="GO" id="GO:0005737">
    <property type="term" value="C:cytoplasm"/>
    <property type="evidence" value="ECO:0000250"/>
    <property type="project" value="UniProtKB"/>
</dbReference>
<dbReference type="GO" id="GO:0005743">
    <property type="term" value="C:mitochondrial inner membrane"/>
    <property type="evidence" value="ECO:0000250"/>
    <property type="project" value="UniProtKB"/>
</dbReference>
<dbReference type="GO" id="GO:0035632">
    <property type="term" value="C:mitochondrial prohibitin complex"/>
    <property type="evidence" value="ECO:0000250"/>
    <property type="project" value="UniProtKB"/>
</dbReference>
<dbReference type="GO" id="GO:0016363">
    <property type="term" value="C:nuclear matrix"/>
    <property type="evidence" value="ECO:0000250"/>
    <property type="project" value="UniProtKB"/>
</dbReference>
<dbReference type="GO" id="GO:0005634">
    <property type="term" value="C:nucleus"/>
    <property type="evidence" value="ECO:0000250"/>
    <property type="project" value="UniProtKB"/>
</dbReference>
<dbReference type="GO" id="GO:0005886">
    <property type="term" value="C:plasma membrane"/>
    <property type="evidence" value="ECO:0000250"/>
    <property type="project" value="UniProtKB"/>
</dbReference>
<dbReference type="GO" id="GO:0042803">
    <property type="term" value="F:protein homodimerization activity"/>
    <property type="evidence" value="ECO:0000250"/>
    <property type="project" value="UniProtKB"/>
</dbReference>
<dbReference type="GO" id="GO:0000423">
    <property type="term" value="P:mitophagy"/>
    <property type="evidence" value="ECO:0000250"/>
    <property type="project" value="UniProtKB"/>
</dbReference>
<dbReference type="CDD" id="cd03401">
    <property type="entry name" value="SPFH_prohibitin"/>
    <property type="match status" value="1"/>
</dbReference>
<dbReference type="FunFam" id="3.30.479.30:FF:000001">
    <property type="entry name" value="Prohibitin 2"/>
    <property type="match status" value="1"/>
</dbReference>
<dbReference type="Gene3D" id="3.30.479.30">
    <property type="entry name" value="Band 7 domain"/>
    <property type="match status" value="1"/>
</dbReference>
<dbReference type="InterPro" id="IPR001107">
    <property type="entry name" value="Band_7"/>
</dbReference>
<dbReference type="InterPro" id="IPR036013">
    <property type="entry name" value="Band_7/SPFH_dom_sf"/>
</dbReference>
<dbReference type="InterPro" id="IPR000163">
    <property type="entry name" value="Prohibitin"/>
</dbReference>
<dbReference type="PANTHER" id="PTHR23222">
    <property type="entry name" value="PROHIBITIN"/>
    <property type="match status" value="1"/>
</dbReference>
<dbReference type="PANTHER" id="PTHR23222:SF1">
    <property type="entry name" value="PROHIBITIN-2"/>
    <property type="match status" value="1"/>
</dbReference>
<dbReference type="Pfam" id="PF01145">
    <property type="entry name" value="Band_7"/>
    <property type="match status" value="1"/>
</dbReference>
<dbReference type="PRINTS" id="PR00679">
    <property type="entry name" value="PROHIBITIN"/>
</dbReference>
<dbReference type="SMART" id="SM00244">
    <property type="entry name" value="PHB"/>
    <property type="match status" value="1"/>
</dbReference>
<dbReference type="SUPFAM" id="SSF117892">
    <property type="entry name" value="Band 7/SPFH domain"/>
    <property type="match status" value="1"/>
</dbReference>
<feature type="chain" id="PRO_0000328654" description="Prohibitin-2">
    <location>
        <begin position="1"/>
        <end position="301"/>
    </location>
</feature>
<feature type="region of interest" description="Necessary for transcriptional repression" evidence="1">
    <location>
        <begin position="19"/>
        <end position="49"/>
    </location>
</feature>
<feature type="region of interest" description="Necessary for transcriptional repression" evidence="1">
    <location>
        <begin position="150"/>
        <end position="174"/>
    </location>
</feature>
<feature type="coiled-coil region" evidence="4">
    <location>
        <begin position="191"/>
        <end position="237"/>
    </location>
</feature>
<sequence length="301" mass="33461">MAQNLKDFAGRLPAGPRGMGTAMKLLLGAGAVAYAVKESVFTVEGGHRAIFFNRIGGVQQDTILAEGLHFRFPWFQYPIIYDIRARPRKISSPTGSKDLQMVNITLRVLSRPLASELPFMYQRLGLDYDERVLPSIVNEVLKSVVAKFNASQLITQRAQVSLLIRRELTERAKDFSIILDDVAITELSFSREYTAAVESKQVAQQEAQRAQFLVEKAKQDQKQKIVQAEGEAAAAKMIGDALSKNPGYLKLRRIRAAQSIAKTIASSQNRVYLNADSLVLNLQDDTFTRGSDSLVAKQTKK</sequence>